<feature type="chain" id="PRO_1000123000" description="Elongation factor P">
    <location>
        <begin position="1"/>
        <end position="189"/>
    </location>
</feature>
<accession>B9LAT1</accession>
<reference key="1">
    <citation type="submission" date="2009-01" db="EMBL/GenBank/DDBJ databases">
        <title>Complete sequence of Chloroflexus sp. Y-400-fl.</title>
        <authorList>
            <consortium name="US DOE Joint Genome Institute"/>
            <person name="Lucas S."/>
            <person name="Copeland A."/>
            <person name="Lapidus A."/>
            <person name="Glavina del Rio T."/>
            <person name="Dalin E."/>
            <person name="Tice H."/>
            <person name="Bruce D."/>
            <person name="Goodwin L."/>
            <person name="Pitluck S."/>
            <person name="Sims D."/>
            <person name="Kiss H."/>
            <person name="Brettin T."/>
            <person name="Detter J.C."/>
            <person name="Han C."/>
            <person name="Larimer F."/>
            <person name="Land M."/>
            <person name="Hauser L."/>
            <person name="Kyrpides N."/>
            <person name="Ovchinnikova G."/>
            <person name="Bryant D.A."/>
            <person name="Richardson P."/>
        </authorList>
    </citation>
    <scope>NUCLEOTIDE SEQUENCE [LARGE SCALE GENOMIC DNA]</scope>
    <source>
        <strain>ATCC 29364 / DSM 637 / Y-400-fl</strain>
    </source>
</reference>
<evidence type="ECO:0000255" key="1">
    <source>
        <dbReference type="HAMAP-Rule" id="MF_00141"/>
    </source>
</evidence>
<proteinExistence type="inferred from homology"/>
<keyword id="KW-0963">Cytoplasm</keyword>
<keyword id="KW-0251">Elongation factor</keyword>
<keyword id="KW-0648">Protein biosynthesis</keyword>
<comment type="function">
    <text evidence="1">Involved in peptide bond synthesis. Stimulates efficient translation and peptide-bond synthesis on native or reconstituted 70S ribosomes in vitro. Probably functions indirectly by altering the affinity of the ribosome for aminoacyl-tRNA, thus increasing their reactivity as acceptors for peptidyl transferase.</text>
</comment>
<comment type="pathway">
    <text evidence="1">Protein biosynthesis; polypeptide chain elongation.</text>
</comment>
<comment type="subcellular location">
    <subcellularLocation>
        <location evidence="1">Cytoplasm</location>
    </subcellularLocation>
</comment>
<comment type="similarity">
    <text evidence="1">Belongs to the elongation factor P family.</text>
</comment>
<protein>
    <recommendedName>
        <fullName evidence="1">Elongation factor P</fullName>
        <shortName evidence="1">EF-P</shortName>
    </recommendedName>
</protein>
<sequence>MAAGTTSDLRNGIVIRYNNDLYQVVEFQHVAPGNWRAFVRMKLKSLTTGKVIEDRVRAGAEIDIVRIERRPMQYLYREGDSFIFMDNDTFDQIPVSADLVGDAVRFMKENETVDLVYDAEKDTIIGVELPIFVNLKVVETTVAVRGDTATNVTKPATLETGAVIEVPAFINEGDVLKIDTRTGEYITRV</sequence>
<gene>
    <name evidence="1" type="primary">efp</name>
    <name type="ordered locus">Chy400_3125</name>
</gene>
<organism>
    <name type="scientific">Chloroflexus aurantiacus (strain ATCC 29364 / DSM 637 / Y-400-fl)</name>
    <dbReference type="NCBI Taxonomy" id="480224"/>
    <lineage>
        <taxon>Bacteria</taxon>
        <taxon>Bacillati</taxon>
        <taxon>Chloroflexota</taxon>
        <taxon>Chloroflexia</taxon>
        <taxon>Chloroflexales</taxon>
        <taxon>Chloroflexineae</taxon>
        <taxon>Chloroflexaceae</taxon>
        <taxon>Chloroflexus</taxon>
    </lineage>
</organism>
<name>EFP_CHLSY</name>
<dbReference type="EMBL" id="CP001364">
    <property type="protein sequence ID" value="ACM54504.1"/>
    <property type="molecule type" value="Genomic_DNA"/>
</dbReference>
<dbReference type="SMR" id="B9LAT1"/>
<dbReference type="KEGG" id="chl:Chy400_3125"/>
<dbReference type="HOGENOM" id="CLU_074944_0_1_0"/>
<dbReference type="OrthoDB" id="9801844at2"/>
<dbReference type="UniPathway" id="UPA00345"/>
<dbReference type="GO" id="GO:0005737">
    <property type="term" value="C:cytoplasm"/>
    <property type="evidence" value="ECO:0007669"/>
    <property type="project" value="UniProtKB-SubCell"/>
</dbReference>
<dbReference type="GO" id="GO:0003746">
    <property type="term" value="F:translation elongation factor activity"/>
    <property type="evidence" value="ECO:0007669"/>
    <property type="project" value="UniProtKB-UniRule"/>
</dbReference>
<dbReference type="GO" id="GO:0043043">
    <property type="term" value="P:peptide biosynthetic process"/>
    <property type="evidence" value="ECO:0007669"/>
    <property type="project" value="InterPro"/>
</dbReference>
<dbReference type="CDD" id="cd04470">
    <property type="entry name" value="S1_EF-P_repeat_1"/>
    <property type="match status" value="1"/>
</dbReference>
<dbReference type="CDD" id="cd05794">
    <property type="entry name" value="S1_EF-P_repeat_2"/>
    <property type="match status" value="1"/>
</dbReference>
<dbReference type="FunFam" id="2.30.30.30:FF:000003">
    <property type="entry name" value="Elongation factor P"/>
    <property type="match status" value="1"/>
</dbReference>
<dbReference type="FunFam" id="2.40.50.140:FF:000004">
    <property type="entry name" value="Elongation factor P"/>
    <property type="match status" value="1"/>
</dbReference>
<dbReference type="FunFam" id="2.40.50.140:FF:000009">
    <property type="entry name" value="Elongation factor P"/>
    <property type="match status" value="1"/>
</dbReference>
<dbReference type="Gene3D" id="2.30.30.30">
    <property type="match status" value="1"/>
</dbReference>
<dbReference type="Gene3D" id="2.40.50.140">
    <property type="entry name" value="Nucleic acid-binding proteins"/>
    <property type="match status" value="2"/>
</dbReference>
<dbReference type="HAMAP" id="MF_00141">
    <property type="entry name" value="EF_P"/>
    <property type="match status" value="1"/>
</dbReference>
<dbReference type="InterPro" id="IPR015365">
    <property type="entry name" value="Elong-fact-P_C"/>
</dbReference>
<dbReference type="InterPro" id="IPR012340">
    <property type="entry name" value="NA-bd_OB-fold"/>
</dbReference>
<dbReference type="InterPro" id="IPR014722">
    <property type="entry name" value="Rib_uL2_dom2"/>
</dbReference>
<dbReference type="InterPro" id="IPR020599">
    <property type="entry name" value="Transl_elong_fac_P/YeiP"/>
</dbReference>
<dbReference type="InterPro" id="IPR013185">
    <property type="entry name" value="Transl_elong_KOW-like"/>
</dbReference>
<dbReference type="InterPro" id="IPR001059">
    <property type="entry name" value="Transl_elong_P/YeiP_cen"/>
</dbReference>
<dbReference type="InterPro" id="IPR013852">
    <property type="entry name" value="Transl_elong_P/YeiP_CS"/>
</dbReference>
<dbReference type="InterPro" id="IPR011768">
    <property type="entry name" value="Transl_elongation_fac_P"/>
</dbReference>
<dbReference type="InterPro" id="IPR008991">
    <property type="entry name" value="Translation_prot_SH3-like_sf"/>
</dbReference>
<dbReference type="NCBIfam" id="TIGR00038">
    <property type="entry name" value="efp"/>
    <property type="match status" value="1"/>
</dbReference>
<dbReference type="NCBIfam" id="NF001810">
    <property type="entry name" value="PRK00529.1"/>
    <property type="match status" value="1"/>
</dbReference>
<dbReference type="PANTHER" id="PTHR30053">
    <property type="entry name" value="ELONGATION FACTOR P"/>
    <property type="match status" value="1"/>
</dbReference>
<dbReference type="PANTHER" id="PTHR30053:SF12">
    <property type="entry name" value="ELONGATION FACTOR P (EF-P) FAMILY PROTEIN"/>
    <property type="match status" value="1"/>
</dbReference>
<dbReference type="Pfam" id="PF01132">
    <property type="entry name" value="EFP"/>
    <property type="match status" value="1"/>
</dbReference>
<dbReference type="Pfam" id="PF08207">
    <property type="entry name" value="EFP_N"/>
    <property type="match status" value="1"/>
</dbReference>
<dbReference type="Pfam" id="PF09285">
    <property type="entry name" value="Elong-fact-P_C"/>
    <property type="match status" value="1"/>
</dbReference>
<dbReference type="PIRSF" id="PIRSF005901">
    <property type="entry name" value="EF-P"/>
    <property type="match status" value="1"/>
</dbReference>
<dbReference type="SMART" id="SM01185">
    <property type="entry name" value="EFP"/>
    <property type="match status" value="1"/>
</dbReference>
<dbReference type="SMART" id="SM00841">
    <property type="entry name" value="Elong-fact-P_C"/>
    <property type="match status" value="1"/>
</dbReference>
<dbReference type="SUPFAM" id="SSF50249">
    <property type="entry name" value="Nucleic acid-binding proteins"/>
    <property type="match status" value="2"/>
</dbReference>
<dbReference type="SUPFAM" id="SSF50104">
    <property type="entry name" value="Translation proteins SH3-like domain"/>
    <property type="match status" value="1"/>
</dbReference>
<dbReference type="PROSITE" id="PS01275">
    <property type="entry name" value="EFP"/>
    <property type="match status" value="1"/>
</dbReference>